<reference evidence="3" key="1">
    <citation type="submission" date="2022-05" db="UniProtKB">
        <title>Purification, biochemical and molecular characterization of alpha-amylase inhibitor extracted from Saussurea costus.</title>
        <authorList>
            <person name="Tomather A.A."/>
            <person name="Abir B."/>
            <person name="Imen B.A."/>
        </authorList>
    </citation>
    <scope>PROTEIN SEQUENCE</scope>
    <source>
        <tissue evidence="2">Leaf</tissue>
    </source>
</reference>
<keyword id="KW-0022">Alpha-amylase inhibitor</keyword>
<keyword id="KW-0903">Direct protein sequencing</keyword>
<keyword id="KW-0964">Secreted</keyword>
<feature type="chain" id="PRO_0000456466" description="Alpha-amylase inhibitor 2">
    <location>
        <begin position="1"/>
        <end position="29"/>
    </location>
</feature>
<feature type="non-terminal residue" evidence="2">
    <location>
        <position position="29"/>
    </location>
</feature>
<name>IAA2_SAUCO</name>
<dbReference type="GO" id="GO:0005576">
    <property type="term" value="C:extracellular region"/>
    <property type="evidence" value="ECO:0007669"/>
    <property type="project" value="UniProtKB-SubCell"/>
</dbReference>
<dbReference type="GO" id="GO:0015066">
    <property type="term" value="F:alpha-amylase inhibitor activity"/>
    <property type="evidence" value="ECO:0007669"/>
    <property type="project" value="UniProtKB-KW"/>
</dbReference>
<accession>C0HM38</accession>
<protein>
    <recommendedName>
        <fullName evidence="2">Alpha-amylase inhibitor 2</fullName>
    </recommendedName>
</protein>
<evidence type="ECO:0000250" key="1">
    <source>
        <dbReference type="UniProtKB" id="P01083"/>
    </source>
</evidence>
<evidence type="ECO:0000303" key="2">
    <source ref="1"/>
</evidence>
<evidence type="ECO:0000305" key="3"/>
<comment type="function">
    <text evidence="1">Alpha-amylase inhibitor.</text>
</comment>
<comment type="subcellular location">
    <subcellularLocation>
        <location evidence="1">Secreted</location>
    </subcellularLocation>
</comment>
<comment type="similarity">
    <text evidence="3">Belongs to the protease inhibitor I6 (cereal trypsin/alpha-amylase inhibitor) family.</text>
</comment>
<organism evidence="2">
    <name type="scientific">Saussurea costus</name>
    <name type="common">Costus</name>
    <name type="synonym">Aucklandia costus</name>
    <dbReference type="NCBI Taxonomy" id="324593"/>
    <lineage>
        <taxon>Eukaryota</taxon>
        <taxon>Viridiplantae</taxon>
        <taxon>Streptophyta</taxon>
        <taxon>Embryophyta</taxon>
        <taxon>Tracheophyta</taxon>
        <taxon>Spermatophyta</taxon>
        <taxon>Magnoliopsida</taxon>
        <taxon>eudicotyledons</taxon>
        <taxon>Gunneridae</taxon>
        <taxon>Pentapetalae</taxon>
        <taxon>asterids</taxon>
        <taxon>campanulids</taxon>
        <taxon>Asterales</taxon>
        <taxon>Asteraceae</taxon>
        <taxon>Carduoideae</taxon>
        <taxon>Cardueae</taxon>
        <taxon>Saussureinae</taxon>
        <taxon>Saussurea</taxon>
    </lineage>
</organism>
<proteinExistence type="evidence at protein level"/>
<sequence>SWCDPATIKYVSGLTGCRAMVKLECLGSQ</sequence>